<accession>Q568K5</accession>
<gene>
    <name type="primary">naa40</name>
    <name type="synonym">nat11</name>
    <name type="ORF">zgc:110241</name>
</gene>
<keyword id="KW-0012">Acyltransferase</keyword>
<keyword id="KW-0963">Cytoplasm</keyword>
<keyword id="KW-0449">Lipoprotein</keyword>
<keyword id="KW-0519">Myristate</keyword>
<keyword id="KW-0539">Nucleus</keyword>
<keyword id="KW-1185">Reference proteome</keyword>
<keyword id="KW-0808">Transferase</keyword>
<reference key="1">
    <citation type="submission" date="2005-04" db="EMBL/GenBank/DDBJ databases">
        <authorList>
            <consortium name="NIH - Zebrafish Gene Collection (ZGC) project"/>
        </authorList>
    </citation>
    <scope>NUCLEOTIDE SEQUENCE [LARGE SCALE MRNA]</scope>
    <source>
        <tissue>Ovary</tissue>
    </source>
</reference>
<organism>
    <name type="scientific">Danio rerio</name>
    <name type="common">Zebrafish</name>
    <name type="synonym">Brachydanio rerio</name>
    <dbReference type="NCBI Taxonomy" id="7955"/>
    <lineage>
        <taxon>Eukaryota</taxon>
        <taxon>Metazoa</taxon>
        <taxon>Chordata</taxon>
        <taxon>Craniata</taxon>
        <taxon>Vertebrata</taxon>
        <taxon>Euteleostomi</taxon>
        <taxon>Actinopterygii</taxon>
        <taxon>Neopterygii</taxon>
        <taxon>Teleostei</taxon>
        <taxon>Ostariophysi</taxon>
        <taxon>Cypriniformes</taxon>
        <taxon>Danionidae</taxon>
        <taxon>Danioninae</taxon>
        <taxon>Danio</taxon>
    </lineage>
</organism>
<name>NAA40_DANRE</name>
<evidence type="ECO:0000250" key="1">
    <source>
        <dbReference type="UniProtKB" id="Q86UY6"/>
    </source>
</evidence>
<evidence type="ECO:0000250" key="2">
    <source>
        <dbReference type="UniProtKB" id="Q8VE10"/>
    </source>
</evidence>
<evidence type="ECO:0000255" key="3"/>
<evidence type="ECO:0000255" key="4">
    <source>
        <dbReference type="PROSITE-ProRule" id="PRU00532"/>
    </source>
</evidence>
<evidence type="ECO:0000305" key="5"/>
<proteinExistence type="evidence at transcript level"/>
<comment type="function">
    <text evidence="1 2">N-alpha-acetyltransferase that specifically mediates the acetylation of the N-terminal residues of histones H4 and H2A. In contrast to other N-alpha-acetyltransferase, has a very specific selectivity for histones H4 and H2A N-terminus and specifically recognizes the 'Ser-Gly-Arg-Gly sequence'.</text>
</comment>
<comment type="catalytic activity">
    <reaction evidence="1">
        <text>N-terminal L-seryl-[histone H4] + acetyl-CoA = N-terminal N(alpha)-acetyl-L-seryl-[histone H4] + CoA + H(+)</text>
        <dbReference type="Rhea" id="RHEA:50596"/>
        <dbReference type="Rhea" id="RHEA-COMP:12740"/>
        <dbReference type="Rhea" id="RHEA-COMP:12743"/>
        <dbReference type="ChEBI" id="CHEBI:15378"/>
        <dbReference type="ChEBI" id="CHEBI:57287"/>
        <dbReference type="ChEBI" id="CHEBI:57288"/>
        <dbReference type="ChEBI" id="CHEBI:64738"/>
        <dbReference type="ChEBI" id="CHEBI:83690"/>
        <dbReference type="EC" id="2.3.1.257"/>
    </reaction>
</comment>
<comment type="catalytic activity">
    <reaction evidence="1">
        <text>N-terminal L-seryl-[histone H2A] + acetyl-CoA = N-terminal N(alpha)-acetyl-L-seryl-[histone H2A] + CoA + H(+)</text>
        <dbReference type="Rhea" id="RHEA:50600"/>
        <dbReference type="Rhea" id="RHEA-COMP:12742"/>
        <dbReference type="Rhea" id="RHEA-COMP:12744"/>
        <dbReference type="ChEBI" id="CHEBI:15378"/>
        <dbReference type="ChEBI" id="CHEBI:57287"/>
        <dbReference type="ChEBI" id="CHEBI:57288"/>
        <dbReference type="ChEBI" id="CHEBI:64738"/>
        <dbReference type="ChEBI" id="CHEBI:83690"/>
        <dbReference type="EC" id="2.3.1.257"/>
    </reaction>
</comment>
<comment type="subcellular location">
    <subcellularLocation>
        <location evidence="1">Cytoplasm</location>
    </subcellularLocation>
    <subcellularLocation>
        <location evidence="1">Nucleus</location>
    </subcellularLocation>
</comment>
<comment type="similarity">
    <text evidence="5">Belongs to the acetyltransferase family. NAA40 subfamily.</text>
</comment>
<sequence length="237" mass="27356">MGRKSNRAKEKKQRRLEERAAMDAVCAKVDAANKLEDPLSAMPVFKKYDRNGLNLQIECKRVTALSPDTVEWAYELTRANMQTLYEQSEWGWKEREKREEMKDERAWYLLARDADSTPLAFSHFRFDVECGDEVLYCYEVQLESKVRRKGLGKFLIQILQLIANSTQMKKVMLTVFKHNHGAYQFFREALQFEIDETSPSMSGCCGEDCSYEILSRRTKYGEVSGHAHGGHCGGCCH</sequence>
<dbReference type="EC" id="2.3.1.257" evidence="1"/>
<dbReference type="EMBL" id="BC092819">
    <property type="protein sequence ID" value="AAH92819.1"/>
    <property type="molecule type" value="mRNA"/>
</dbReference>
<dbReference type="RefSeq" id="NP_001017632.1">
    <property type="nucleotide sequence ID" value="NM_001017632.1"/>
</dbReference>
<dbReference type="SMR" id="Q568K5"/>
<dbReference type="FunCoup" id="Q568K5">
    <property type="interactions" value="2426"/>
</dbReference>
<dbReference type="STRING" id="7955.ENSDARP00000029934"/>
<dbReference type="PaxDb" id="7955-ENSDARP00000029934"/>
<dbReference type="DNASU" id="550325"/>
<dbReference type="Ensembl" id="ENSDART00000039265">
    <property type="protein sequence ID" value="ENSDARP00000029934"/>
    <property type="gene ID" value="ENSDARG00000024109"/>
</dbReference>
<dbReference type="GeneID" id="550325"/>
<dbReference type="KEGG" id="dre:550325"/>
<dbReference type="AGR" id="ZFIN:ZDB-GENE-050417-105"/>
<dbReference type="CTD" id="79829"/>
<dbReference type="ZFIN" id="ZDB-GENE-050417-105">
    <property type="gene designation" value="naa40"/>
</dbReference>
<dbReference type="eggNOG" id="KOG2488">
    <property type="taxonomic scope" value="Eukaryota"/>
</dbReference>
<dbReference type="HOGENOM" id="CLU_051699_4_0_1"/>
<dbReference type="InParanoid" id="Q568K5"/>
<dbReference type="OMA" id="AYLHYRF"/>
<dbReference type="OrthoDB" id="424551at2759"/>
<dbReference type="PhylomeDB" id="Q568K5"/>
<dbReference type="TreeFam" id="TF315129"/>
<dbReference type="PRO" id="PR:Q568K5"/>
<dbReference type="Proteomes" id="UP000000437">
    <property type="component" value="Chromosome 7"/>
</dbReference>
<dbReference type="Bgee" id="ENSDARG00000024109">
    <property type="expression patterns" value="Expressed in blastula and 23 other cell types or tissues"/>
</dbReference>
<dbReference type="ExpressionAtlas" id="Q568K5">
    <property type="expression patterns" value="baseline"/>
</dbReference>
<dbReference type="GO" id="GO:0005737">
    <property type="term" value="C:cytoplasm"/>
    <property type="evidence" value="ECO:0007669"/>
    <property type="project" value="UniProtKB-SubCell"/>
</dbReference>
<dbReference type="GO" id="GO:0005634">
    <property type="term" value="C:nucleus"/>
    <property type="evidence" value="ECO:0000318"/>
    <property type="project" value="GO_Central"/>
</dbReference>
<dbReference type="GO" id="GO:0043998">
    <property type="term" value="F:histone H2A acetyltransferase activity"/>
    <property type="evidence" value="ECO:0000250"/>
    <property type="project" value="UniProtKB"/>
</dbReference>
<dbReference type="GO" id="GO:0010485">
    <property type="term" value="F:histone H4 acetyltransferase activity"/>
    <property type="evidence" value="ECO:0000250"/>
    <property type="project" value="UniProtKB"/>
</dbReference>
<dbReference type="GO" id="GO:1990189">
    <property type="term" value="F:protein N-terminal-serine acetyltransferase activity"/>
    <property type="evidence" value="ECO:0000250"/>
    <property type="project" value="UniProtKB"/>
</dbReference>
<dbReference type="FunFam" id="3.40.630.30:FF:000033">
    <property type="entry name" value="N-alpha-acetyltransferase 40 isoform X1"/>
    <property type="match status" value="1"/>
</dbReference>
<dbReference type="Gene3D" id="3.40.630.30">
    <property type="match status" value="1"/>
</dbReference>
<dbReference type="InterPro" id="IPR016181">
    <property type="entry name" value="Acyl_CoA_acyltransferase"/>
</dbReference>
<dbReference type="InterPro" id="IPR000182">
    <property type="entry name" value="GNAT_dom"/>
</dbReference>
<dbReference type="InterPro" id="IPR039949">
    <property type="entry name" value="NAA40"/>
</dbReference>
<dbReference type="PANTHER" id="PTHR20531">
    <property type="entry name" value="N-ALPHA-ACETYLTRANSFERASE 40"/>
    <property type="match status" value="1"/>
</dbReference>
<dbReference type="PANTHER" id="PTHR20531:SF1">
    <property type="entry name" value="N-ALPHA-ACETYLTRANSFERASE 40"/>
    <property type="match status" value="1"/>
</dbReference>
<dbReference type="Pfam" id="PF00583">
    <property type="entry name" value="Acetyltransf_1"/>
    <property type="match status" value="1"/>
</dbReference>
<dbReference type="SUPFAM" id="SSF55729">
    <property type="entry name" value="Acyl-CoA N-acyltransferases (Nat)"/>
    <property type="match status" value="1"/>
</dbReference>
<dbReference type="PROSITE" id="PS51186">
    <property type="entry name" value="GNAT"/>
    <property type="match status" value="1"/>
</dbReference>
<protein>
    <recommendedName>
        <fullName evidence="1">N-alpha-acetyltransferase 40</fullName>
        <ecNumber evidence="1">2.3.1.257</ecNumber>
    </recommendedName>
    <alternativeName>
        <fullName>N-acetyltransferase 11</fullName>
    </alternativeName>
    <alternativeName>
        <fullName evidence="1">N-alpha-acetyltransferase D</fullName>
        <shortName evidence="1">NatD</shortName>
    </alternativeName>
</protein>
<feature type="initiator methionine" description="Removed" evidence="3">
    <location>
        <position position="1"/>
    </location>
</feature>
<feature type="chain" id="PRO_0000284899" description="N-alpha-acetyltransferase 40">
    <location>
        <begin position="2"/>
        <end position="237"/>
    </location>
</feature>
<feature type="domain" description="N-acetyltransferase" evidence="4">
    <location>
        <begin position="63"/>
        <end position="216"/>
    </location>
</feature>
<feature type="binding site" evidence="1">
    <location>
        <position position="85"/>
    </location>
    <ligand>
        <name>substrate</name>
    </ligand>
</feature>
<feature type="binding site" evidence="1">
    <location>
        <begin position="127"/>
        <end position="129"/>
    </location>
    <ligand>
        <name>substrate</name>
    </ligand>
</feature>
<feature type="binding site" evidence="1">
    <location>
        <position position="138"/>
    </location>
    <ligand>
        <name>substrate</name>
    </ligand>
</feature>
<feature type="binding site" evidence="1">
    <location>
        <begin position="140"/>
        <end position="142"/>
    </location>
    <ligand>
        <name>acetyl-CoA</name>
        <dbReference type="ChEBI" id="CHEBI:57288"/>
    </ligand>
</feature>
<feature type="binding site" evidence="1">
    <location>
        <begin position="148"/>
        <end position="153"/>
    </location>
    <ligand>
        <name>acetyl-CoA</name>
        <dbReference type="ChEBI" id="CHEBI:57288"/>
    </ligand>
</feature>
<feature type="binding site" evidence="1">
    <location>
        <position position="174"/>
    </location>
    <ligand>
        <name>substrate</name>
    </ligand>
</feature>
<feature type="binding site" evidence="1">
    <location>
        <position position="179"/>
    </location>
    <ligand>
        <name>acetyl-CoA</name>
        <dbReference type="ChEBI" id="CHEBI:57288"/>
    </ligand>
</feature>
<feature type="binding site" evidence="1">
    <location>
        <position position="211"/>
    </location>
    <ligand>
        <name>substrate</name>
    </ligand>
</feature>
<feature type="site" description="Essential for catalytic activity" evidence="1">
    <location>
        <position position="139"/>
    </location>
</feature>
<feature type="lipid moiety-binding region" description="N-myristoyl glycine" evidence="3">
    <location>
        <position position="2"/>
    </location>
</feature>